<reference key="1">
    <citation type="journal article" date="2007" name="PLoS Genet.">
        <title>Patterns and implications of gene gain and loss in the evolution of Prochlorococcus.</title>
        <authorList>
            <person name="Kettler G.C."/>
            <person name="Martiny A.C."/>
            <person name="Huang K."/>
            <person name="Zucker J."/>
            <person name="Coleman M.L."/>
            <person name="Rodrigue S."/>
            <person name="Chen F."/>
            <person name="Lapidus A."/>
            <person name="Ferriera S."/>
            <person name="Johnson J."/>
            <person name="Steglich C."/>
            <person name="Church G.M."/>
            <person name="Richardson P."/>
            <person name="Chisholm S.W."/>
        </authorList>
    </citation>
    <scope>NUCLEOTIDE SEQUENCE [LARGE SCALE GENOMIC DNA]</scope>
    <source>
        <strain>NATL1A</strain>
    </source>
</reference>
<proteinExistence type="inferred from homology"/>
<gene>
    <name evidence="1" type="primary">pebA</name>
    <name type="ordered locus">NATL1_20431</name>
</gene>
<dbReference type="EC" id="1.3.7.2" evidence="1"/>
<dbReference type="EMBL" id="CP000553">
    <property type="protein sequence ID" value="ABM76599.1"/>
    <property type="molecule type" value="Genomic_DNA"/>
</dbReference>
<dbReference type="RefSeq" id="WP_011824549.1">
    <property type="nucleotide sequence ID" value="NC_008819.1"/>
</dbReference>
<dbReference type="SMR" id="A2C539"/>
<dbReference type="KEGG" id="pme:NATL1_20431"/>
<dbReference type="eggNOG" id="ENOG502Z8J9">
    <property type="taxonomic scope" value="Bacteria"/>
</dbReference>
<dbReference type="HOGENOM" id="CLU_086208_0_0_3"/>
<dbReference type="Proteomes" id="UP000002592">
    <property type="component" value="Chromosome"/>
</dbReference>
<dbReference type="GO" id="GO:0050617">
    <property type="term" value="F:15,16-dihydrobiliverdin:ferredoxin oxidoreductase activity"/>
    <property type="evidence" value="ECO:0007669"/>
    <property type="project" value="UniProtKB-UniRule"/>
</dbReference>
<dbReference type="GO" id="GO:0050897">
    <property type="term" value="F:cobalt ion binding"/>
    <property type="evidence" value="ECO:0007669"/>
    <property type="project" value="InterPro"/>
</dbReference>
<dbReference type="GO" id="GO:0010024">
    <property type="term" value="P:phytochromobilin biosynthetic process"/>
    <property type="evidence" value="ECO:0007669"/>
    <property type="project" value="InterPro"/>
</dbReference>
<dbReference type="Gene3D" id="3.40.1500.20">
    <property type="match status" value="1"/>
</dbReference>
<dbReference type="HAMAP" id="MF_00792">
    <property type="entry name" value="PebA"/>
    <property type="match status" value="1"/>
</dbReference>
<dbReference type="InterPro" id="IPR023658">
    <property type="entry name" value="DiHydbiliverdin_OxRdtase"/>
</dbReference>
<dbReference type="InterPro" id="IPR009249">
    <property type="entry name" value="Ferredoxin-dep_bilin_Rdtase"/>
</dbReference>
<dbReference type="NCBIfam" id="NF009720">
    <property type="entry name" value="PRK13247.1"/>
    <property type="match status" value="1"/>
</dbReference>
<dbReference type="PANTHER" id="PTHR34557">
    <property type="entry name" value="PHYTOCHROMOBILIN:FERREDOXIN OXIDOREDUCTASE, CHLOROPLASTIC"/>
    <property type="match status" value="1"/>
</dbReference>
<dbReference type="PANTHER" id="PTHR34557:SF1">
    <property type="entry name" value="PHYTOCHROMOBILIN:FERREDOXIN OXIDOREDUCTASE, CHLOROPLASTIC"/>
    <property type="match status" value="1"/>
</dbReference>
<dbReference type="Pfam" id="PF05996">
    <property type="entry name" value="Fe_bilin_red"/>
    <property type="match status" value="1"/>
</dbReference>
<organism>
    <name type="scientific">Prochlorococcus marinus (strain NATL1A)</name>
    <dbReference type="NCBI Taxonomy" id="167555"/>
    <lineage>
        <taxon>Bacteria</taxon>
        <taxon>Bacillati</taxon>
        <taxon>Cyanobacteriota</taxon>
        <taxon>Cyanophyceae</taxon>
        <taxon>Synechococcales</taxon>
        <taxon>Prochlorococcaceae</taxon>
        <taxon>Prochlorococcus</taxon>
    </lineage>
</organism>
<accession>A2C539</accession>
<comment type="function">
    <text evidence="1">Catalyzes the two-electron reduction of biliverdin IX-alpha at the C15 methine bridge.</text>
</comment>
<comment type="catalytic activity">
    <reaction evidence="1">
        <text>15,16-dihydrobiliverdin + oxidized 2[4Fe-4S]-[ferredoxin] = biliverdin IXalpha + reduced 2[4Fe-4S]-[ferredoxin] + 2 H(+)</text>
        <dbReference type="Rhea" id="RHEA:10168"/>
        <dbReference type="Rhea" id="RHEA-COMP:10002"/>
        <dbReference type="Rhea" id="RHEA-COMP:10004"/>
        <dbReference type="ChEBI" id="CHEBI:15378"/>
        <dbReference type="ChEBI" id="CHEBI:33722"/>
        <dbReference type="ChEBI" id="CHEBI:33723"/>
        <dbReference type="ChEBI" id="CHEBI:57899"/>
        <dbReference type="ChEBI" id="CHEBI:57991"/>
        <dbReference type="EC" id="1.3.7.2"/>
    </reaction>
</comment>
<comment type="similarity">
    <text evidence="1">Belongs to the HY2 family.</text>
</comment>
<name>PEBA_PROM1</name>
<feature type="chain" id="PRO_1000046918" description="15,16-dihydrobiliverdin:ferredoxin oxidoreductase">
    <location>
        <begin position="1"/>
        <end position="238"/>
    </location>
</feature>
<keyword id="KW-0560">Oxidoreductase</keyword>
<sequence>MFNDLLSELTKNILEHGGKKLIVPNEFCECVSKQGNCKLNSWLWDVPGFRRWRVTRLDAGDRLQVLNSVAYPNEQNDMPIMGIDLLWFEKKQKLVAILDFQPLVQDKEYLDRYFDGLKSLKKSFNEFNSDMKSNIYDPTKYFSPWALFCKGGNFEAENILPKIFSSFLKCYWKNLDLSKANENHIKSQEVSILHIDYDKYSAEKDPAHGLFSGFFGKEWSEKYMKEFLFPLSLENINS</sequence>
<evidence type="ECO:0000255" key="1">
    <source>
        <dbReference type="HAMAP-Rule" id="MF_00792"/>
    </source>
</evidence>
<protein>
    <recommendedName>
        <fullName evidence="1">15,16-dihydrobiliverdin:ferredoxin oxidoreductase</fullName>
        <ecNumber evidence="1">1.3.7.2</ecNumber>
    </recommendedName>
</protein>